<sequence>MNIINNSENVCTGVKIWLCICCIGILVMVFIGGITRLTHSGLSITEWNPVIGIFPPVTEKMWIAEKIKYMATPEYKYITSNITLTEFKKLYLIEYFHRLLGRIVGLVFLIPFLYFMYKQKLSKNLIHRFILIAFLILVQGVMGWYMVKSGLIDRPHVSHYRLAMHLLLALAIFYLLWKHFLLSVVHQIKCNIKVTNTSVFYIIISLITIQITCGALVAGLNAGLLSKDIPFLSDKVGLNDLLFIKPWWHNIYNNPITVQFIHEVIALLILIIVVITLLVLKVRIFPMYLLLALLLIQLTLGILTFIYNVPIILASLHQVTAFILFASSIYLLHYVKLLQIQYVKNKI</sequence>
<comment type="function">
    <text evidence="1">Catalyzes the conversion of heme O to heme A by two successive hydroxylations of the methyl group at C8. The first hydroxylation forms heme I, the second hydroxylation results in an unstable dihydroxymethyl group, which spontaneously dehydrates, resulting in the formyl group of heme A.</text>
</comment>
<comment type="catalytic activity">
    <reaction evidence="1">
        <text>Fe(II)-heme o + 2 A + H2O = Fe(II)-heme a + 2 AH2</text>
        <dbReference type="Rhea" id="RHEA:63388"/>
        <dbReference type="ChEBI" id="CHEBI:13193"/>
        <dbReference type="ChEBI" id="CHEBI:15377"/>
        <dbReference type="ChEBI" id="CHEBI:17499"/>
        <dbReference type="ChEBI" id="CHEBI:60530"/>
        <dbReference type="ChEBI" id="CHEBI:61715"/>
        <dbReference type="EC" id="1.17.99.9"/>
    </reaction>
    <physiologicalReaction direction="left-to-right" evidence="1">
        <dbReference type="Rhea" id="RHEA:63389"/>
    </physiologicalReaction>
</comment>
<comment type="cofactor">
    <cofactor evidence="1">
        <name>heme b</name>
        <dbReference type="ChEBI" id="CHEBI:60344"/>
    </cofactor>
</comment>
<comment type="pathway">
    <text evidence="1">Porphyrin-containing compound metabolism; heme A biosynthesis; heme A from heme O: step 1/1.</text>
</comment>
<comment type="subunit">
    <text evidence="1">Interacts with CtaB.</text>
</comment>
<comment type="subcellular location">
    <subcellularLocation>
        <location evidence="1">Cell membrane</location>
        <topology evidence="1">Multi-pass membrane protein</topology>
    </subcellularLocation>
</comment>
<comment type="similarity">
    <text evidence="1">Belongs to the COX15/CtaA family. Type 2 subfamily.</text>
</comment>
<comment type="sequence caution" evidence="2">
    <conflict type="erroneous initiation">
        <sequence resource="EMBL-CDS" id="CAH58436"/>
    </conflict>
</comment>
<comment type="sequence caution" evidence="2">
    <conflict type="erroneous initiation">
        <sequence resource="EMBL-CDS" id="CAI27233"/>
    </conflict>
</comment>
<feature type="chain" id="PRO_0000349033" description="Heme A synthase">
    <location>
        <begin position="1"/>
        <end position="347"/>
    </location>
</feature>
<feature type="transmembrane region" description="Helical" evidence="1">
    <location>
        <begin position="14"/>
        <end position="34"/>
    </location>
</feature>
<feature type="transmembrane region" description="Helical" evidence="1">
    <location>
        <begin position="96"/>
        <end position="116"/>
    </location>
</feature>
<feature type="transmembrane region" description="Helical" evidence="1">
    <location>
        <begin position="129"/>
        <end position="149"/>
    </location>
</feature>
<feature type="transmembrane region" description="Helical" evidence="1">
    <location>
        <begin position="162"/>
        <end position="182"/>
    </location>
</feature>
<feature type="transmembrane region" description="Helical" evidence="1">
    <location>
        <begin position="199"/>
        <end position="219"/>
    </location>
</feature>
<feature type="transmembrane region" description="Helical" evidence="1">
    <location>
        <begin position="260"/>
        <end position="280"/>
    </location>
</feature>
<feature type="transmembrane region" description="Helical" evidence="1">
    <location>
        <begin position="287"/>
        <end position="307"/>
    </location>
</feature>
<feature type="transmembrane region" description="Helical" evidence="1">
    <location>
        <begin position="311"/>
        <end position="331"/>
    </location>
</feature>
<feature type="binding site" description="axial binding residue" evidence="1">
    <location>
        <position position="262"/>
    </location>
    <ligand>
        <name>heme</name>
        <dbReference type="ChEBI" id="CHEBI:30413"/>
    </ligand>
    <ligandPart>
        <name>Fe</name>
        <dbReference type="ChEBI" id="CHEBI:18248"/>
    </ligandPart>
</feature>
<feature type="binding site" description="axial binding residue" evidence="1">
    <location>
        <position position="317"/>
    </location>
    <ligand>
        <name>heme</name>
        <dbReference type="ChEBI" id="CHEBI:30413"/>
    </ligand>
    <ligandPart>
        <name>Fe</name>
        <dbReference type="ChEBI" id="CHEBI:18248"/>
    </ligandPart>
</feature>
<proteinExistence type="inferred from homology"/>
<organism>
    <name type="scientific">Ehrlichia ruminantium (strain Welgevonden)</name>
    <dbReference type="NCBI Taxonomy" id="254945"/>
    <lineage>
        <taxon>Bacteria</taxon>
        <taxon>Pseudomonadati</taxon>
        <taxon>Pseudomonadota</taxon>
        <taxon>Alphaproteobacteria</taxon>
        <taxon>Rickettsiales</taxon>
        <taxon>Anaplasmataceae</taxon>
        <taxon>Ehrlichia</taxon>
    </lineage>
</organism>
<dbReference type="EC" id="1.17.99.9" evidence="1"/>
<dbReference type="EMBL" id="CR767821">
    <property type="protein sequence ID" value="CAH58436.1"/>
    <property type="status" value="ALT_INIT"/>
    <property type="molecule type" value="Genomic_DNA"/>
</dbReference>
<dbReference type="EMBL" id="CR925678">
    <property type="protein sequence ID" value="CAI27233.1"/>
    <property type="status" value="ALT_INIT"/>
    <property type="molecule type" value="Genomic_DNA"/>
</dbReference>
<dbReference type="RefSeq" id="WP_173358438.1">
    <property type="nucleotide sequence ID" value="NC_005295.2"/>
</dbReference>
<dbReference type="SMR" id="Q5HAH7"/>
<dbReference type="GeneID" id="33057725"/>
<dbReference type="KEGG" id="eru:Erum7040"/>
<dbReference type="KEGG" id="erw:ERWE_CDS_07390"/>
<dbReference type="eggNOG" id="COG1612">
    <property type="taxonomic scope" value="Bacteria"/>
</dbReference>
<dbReference type="HOGENOM" id="CLU_017627_0_0_5"/>
<dbReference type="UniPathway" id="UPA00269">
    <property type="reaction ID" value="UER00713"/>
</dbReference>
<dbReference type="Proteomes" id="UP000001021">
    <property type="component" value="Chromosome"/>
</dbReference>
<dbReference type="GO" id="GO:0005886">
    <property type="term" value="C:plasma membrane"/>
    <property type="evidence" value="ECO:0007669"/>
    <property type="project" value="UniProtKB-SubCell"/>
</dbReference>
<dbReference type="GO" id="GO:0046872">
    <property type="term" value="F:metal ion binding"/>
    <property type="evidence" value="ECO:0007669"/>
    <property type="project" value="UniProtKB-KW"/>
</dbReference>
<dbReference type="GO" id="GO:0016653">
    <property type="term" value="F:oxidoreductase activity, acting on NAD(P)H, heme protein as acceptor"/>
    <property type="evidence" value="ECO:0007669"/>
    <property type="project" value="InterPro"/>
</dbReference>
<dbReference type="GO" id="GO:0006784">
    <property type="term" value="P:heme A biosynthetic process"/>
    <property type="evidence" value="ECO:0007669"/>
    <property type="project" value="UniProtKB-UniRule"/>
</dbReference>
<dbReference type="HAMAP" id="MF_01665">
    <property type="entry name" value="HemeA_synth_type2"/>
    <property type="match status" value="1"/>
</dbReference>
<dbReference type="InterPro" id="IPR003780">
    <property type="entry name" value="COX15/CtaA_fam"/>
</dbReference>
<dbReference type="InterPro" id="IPR023754">
    <property type="entry name" value="HemeA_Synthase_type2"/>
</dbReference>
<dbReference type="PANTHER" id="PTHR23289">
    <property type="entry name" value="CYTOCHROME C OXIDASE ASSEMBLY PROTEIN COX15"/>
    <property type="match status" value="1"/>
</dbReference>
<dbReference type="PANTHER" id="PTHR23289:SF2">
    <property type="entry name" value="CYTOCHROME C OXIDASE ASSEMBLY PROTEIN COX15 HOMOLOG"/>
    <property type="match status" value="1"/>
</dbReference>
<dbReference type="Pfam" id="PF02628">
    <property type="entry name" value="COX15-CtaA"/>
    <property type="match status" value="1"/>
</dbReference>
<gene>
    <name evidence="1" type="primary">ctaA</name>
    <name type="synonym">coxW</name>
    <name type="ordered locus">Erum7040</name>
    <name type="ordered locus">ERWE_CDS_07390</name>
</gene>
<accession>Q5HAH7</accession>
<accession>Q5FDH2</accession>
<reference key="1">
    <citation type="journal article" date="2005" name="Proc. Natl. Acad. Sci. U.S.A.">
        <title>The genome of the heartwater agent Ehrlichia ruminantium contains multiple tandem repeats of actively variable copy number.</title>
        <authorList>
            <person name="Collins N.E."/>
            <person name="Liebenberg J."/>
            <person name="de Villiers E.P."/>
            <person name="Brayton K.A."/>
            <person name="Louw E."/>
            <person name="Pretorius A."/>
            <person name="Faber F.E."/>
            <person name="van Heerden H."/>
            <person name="Josemans A."/>
            <person name="van Kleef M."/>
            <person name="Steyn H.C."/>
            <person name="van Strijp M.F."/>
            <person name="Zweygarth E."/>
            <person name="Jongejan F."/>
            <person name="Maillard J.C."/>
            <person name="Berthier D."/>
            <person name="Botha M."/>
            <person name="Joubert F."/>
            <person name="Corton C.H."/>
            <person name="Thomson N.R."/>
            <person name="Allsopp M.T."/>
            <person name="Allsopp B.A."/>
        </authorList>
    </citation>
    <scope>NUCLEOTIDE SEQUENCE [LARGE SCALE GENOMIC DNA]</scope>
    <source>
        <strain>Welgevonden</strain>
    </source>
</reference>
<reference key="2">
    <citation type="journal article" date="2006" name="J. Bacteriol.">
        <title>Comparative genomic analysis of three strains of Ehrlichia ruminantium reveals an active process of genome size plasticity.</title>
        <authorList>
            <person name="Frutos R."/>
            <person name="Viari A."/>
            <person name="Ferraz C."/>
            <person name="Morgat A."/>
            <person name="Eychenie S."/>
            <person name="Kandassamy Y."/>
            <person name="Chantal I."/>
            <person name="Bensaid A."/>
            <person name="Coissac E."/>
            <person name="Vachiery N."/>
            <person name="Demaille J."/>
            <person name="Martinez D."/>
        </authorList>
    </citation>
    <scope>NUCLEOTIDE SEQUENCE [LARGE SCALE GENOMIC DNA]</scope>
    <source>
        <strain>Welgevonden</strain>
    </source>
</reference>
<protein>
    <recommendedName>
        <fullName evidence="1">Heme A synthase</fullName>
        <shortName evidence="1">HAS</shortName>
        <ecNumber evidence="1">1.17.99.9</ecNumber>
    </recommendedName>
    <alternativeName>
        <fullName evidence="1">Cytochrome aa3-controlling protein</fullName>
    </alternativeName>
</protein>
<name>CTAA_EHRRW</name>
<keyword id="KW-1003">Cell membrane</keyword>
<keyword id="KW-0350">Heme biosynthesis</keyword>
<keyword id="KW-0408">Iron</keyword>
<keyword id="KW-0472">Membrane</keyword>
<keyword id="KW-0479">Metal-binding</keyword>
<keyword id="KW-0560">Oxidoreductase</keyword>
<keyword id="KW-0812">Transmembrane</keyword>
<keyword id="KW-1133">Transmembrane helix</keyword>
<evidence type="ECO:0000255" key="1">
    <source>
        <dbReference type="HAMAP-Rule" id="MF_01665"/>
    </source>
</evidence>
<evidence type="ECO:0000305" key="2"/>